<comment type="function">
    <text evidence="2 4">Component of a binary toxin active against Culex and some Aedes mosquito larvae (PubMed:1512580, PubMed:8419297). The individual subunits are not toxic. BinAB binds to the gastric caecum and posterior midgut of C.quinquefasciatus larvae; this subunit alone binds the entire larval gut. Binary toxin internalization into host gut cells requires both proteins (PubMed:1512580). Toxic to Aedes atropalpus mosquito larvae; mortality towards both C.quinquefasciatus and A.atropalpus is maximal by 48 hours. A.aegypti is not very susceptible to this toxin (PubMed:8419297).</text>
</comment>
<comment type="subunit">
    <text evidence="1">Forms a heterodimer with BinB.</text>
</comment>
<comment type="subcellular location">
    <subcellularLocation>
        <location evidence="3">Spore</location>
        <location evidence="3">Perispore</location>
    </subcellularLocation>
</comment>
<comment type="developmental stage">
    <text evidence="3">The parasporal crystal protein is produced during sporulation and accumulates as a spore inclusion; crystals are separated from the forespores by a branch of the exosporium across the cell. The matrix of the paraspore is dissolved within 15 minutes following Culex quinquefasciatus larvae feeding.</text>
</comment>
<comment type="domain">
    <text evidence="1">Has an N-terminal beta-trefoil domain and a C-terminal pore-forming domain. The trefoil domain has barrel and cap subdomains; the cap has 3 carbohydrate-binding modules while the barrel is involved in host cell receptor binding. At neutral pH the carbohydrate-binding modules are accessible on the toxin surface but the barrel subdomain is not.</text>
</comment>
<comment type="PTM">
    <text evidence="1">Processed by proteases in the mosquito gut, probably at both the N- and C-termini.</text>
</comment>
<comment type="similarity">
    <text evidence="7">Belongs to the toxin_10 family.</text>
</comment>
<accession>P05516</accession>
<proteinExistence type="evidence at protein level"/>
<sequence>MRNLDFIDSFIPTEGKYIRVMDFYNSEYPFCIHAPSAPNGDIMTEICSRENNQYFIFFPTDDGRVIIANRHNGSVFTGEATSVVSDIYTGSPLQFFREFKRTMSTYYLAIQNPESATDVRALEPNSHELPSRLYFTNNIENNSNILISNKEQIYLTLPSLPENEQYPKTPVLSGIDDIGPNQSEKSIIGSTLIPCIMVSDFISLGERMKTTPYYYVKHTQYWQSMWSALFPPGSKETKTEKSGITDTSQISMTDGINVSIGADFGLKFGNKTFGIKGGFTYDTKTQITNTSQLLIETTYTREYTNTENFPVRYTGYVLASEFTLHRSDGTQVNTIPWVALNDNYTTIARYPHFASEPLLGNTKIITDDQN</sequence>
<dbReference type="EMBL" id="X07025">
    <property type="protein sequence ID" value="CAA30074.1"/>
    <property type="molecule type" value="Genomic_DNA"/>
</dbReference>
<dbReference type="PIR" id="D28211">
    <property type="entry name" value="D28211"/>
</dbReference>
<dbReference type="RefSeq" id="WP_036216620.1">
    <property type="nucleotide sequence ID" value="NZ_JPDJ01000092.1"/>
</dbReference>
<dbReference type="SMR" id="P05516"/>
<dbReference type="GO" id="GO:0090729">
    <property type="term" value="F:toxin activity"/>
    <property type="evidence" value="ECO:0007669"/>
    <property type="project" value="UniProtKB-KW"/>
</dbReference>
<dbReference type="GO" id="GO:0030435">
    <property type="term" value="P:sporulation resulting in formation of a cellular spore"/>
    <property type="evidence" value="ECO:0007669"/>
    <property type="project" value="UniProtKB-KW"/>
</dbReference>
<dbReference type="CDD" id="cd23429">
    <property type="entry name" value="beta-trefoil_Ricin_BinAB"/>
    <property type="match status" value="1"/>
</dbReference>
<dbReference type="InterPro" id="IPR035992">
    <property type="entry name" value="Ricin_B-like_lectins"/>
</dbReference>
<dbReference type="InterPro" id="IPR008872">
    <property type="entry name" value="Toxin_P42"/>
</dbReference>
<dbReference type="Pfam" id="PF05431">
    <property type="entry name" value="Toxin_10"/>
    <property type="match status" value="1"/>
</dbReference>
<dbReference type="SUPFAM" id="SSF50370">
    <property type="entry name" value="Ricin B-like lectins"/>
    <property type="match status" value="1"/>
</dbReference>
<protein>
    <recommendedName>
        <fullName evidence="7">Binary larvicide subunit BinA</fullName>
    </recommendedName>
    <alternativeName>
        <fullName evidence="6">41.9 kDa insecticidal toxin</fullName>
    </alternativeName>
    <alternativeName>
        <fullName evidence="5">Larvicidal toxin protein P42</fullName>
    </alternativeName>
</protein>
<gene>
    <name type="primary">binA</name>
</gene>
<evidence type="ECO:0000250" key="1">
    <source>
        <dbReference type="UniProtKB" id="P06575"/>
    </source>
</evidence>
<evidence type="ECO:0000269" key="2">
    <source>
    </source>
</evidence>
<evidence type="ECO:0000269" key="3">
    <source>
    </source>
</evidence>
<evidence type="ECO:0000269" key="4">
    <source>
    </source>
</evidence>
<evidence type="ECO:0000303" key="5">
    <source>
    </source>
</evidence>
<evidence type="ECO:0000303" key="6">
    <source>
    </source>
</evidence>
<evidence type="ECO:0000305" key="7"/>
<feature type="propeptide" id="PRO_0000448619" evidence="1">
    <location>
        <begin position="1"/>
        <end position="6"/>
    </location>
</feature>
<feature type="chain" id="PRO_0000174112" description="Binary larvicide subunit BinA">
    <location>
        <begin position="7"/>
        <end position="370"/>
    </location>
</feature>
<feature type="region of interest" description="Beta-trefoil domain" evidence="1">
    <location>
        <begin position="1"/>
        <end position="155"/>
    </location>
</feature>
<feature type="region of interest" description="Pore-forming domain" evidence="1">
    <location>
        <begin position="156"/>
        <end position="370"/>
    </location>
</feature>
<feature type="disulfide bond" evidence="1">
    <location>
        <begin position="31"/>
        <end position="47"/>
    </location>
</feature>
<feature type="mutagenesis site" description="In combination with whole BinB no longer toxic, binds larval gut, no longer internalized." evidence="2">
    <location>
        <begin position="1"/>
        <end position="34"/>
    </location>
</feature>
<feature type="mutagenesis site" description="In combination with whole BinB 15-fold decrease in toxicity, binds larval gut, still internalized." evidence="2">
    <location>
        <begin position="1"/>
        <end position="17"/>
    </location>
</feature>
<feature type="mutagenesis site" description="Increases early toxicity against C.quinquefasciatus, enhances toxicity against A.aegypti larvae, protein is more like BinA from strain 2362." evidence="4">
    <original>F</original>
    <variation>V</variation>
    <location>
        <position position="99"/>
    </location>
</feature>
<feature type="mutagenesis site" description="No change in toxicity against C.quinquefasciatus, slightly higher toxicity against A.aegypti larvae, protein is more like BinA from strain 2362." evidence="4">
    <original>S</original>
    <variation>A</variation>
    <location>
        <position position="104"/>
    </location>
</feature>
<feature type="mutagenesis site" description="10- to 250-fold decrease in toxicity against C.quinquefasciatus, not toxic against A.aegypti larvae, protein is more like BinA from strain IAB59." evidence="4">
    <original>S</original>
    <variation>E</variation>
    <variation>G</variation>
    <location>
        <position position="104"/>
    </location>
</feature>
<feature type="mutagenesis site" description="In combination with whole BinB no longer toxic, binds larval gut, no longer internalized." evidence="2">
    <location>
        <begin position="350"/>
        <end position="370"/>
    </location>
</feature>
<feature type="mutagenesis site" description="In combination with whole BinB 5-fold decrease in toxicity, binds larval gut, still internalized." evidence="2">
    <location>
        <begin position="359"/>
        <end position="370"/>
    </location>
</feature>
<reference key="1">
    <citation type="journal article" date="1988" name="Nucleic Acids Res.">
        <title>Bacillus sphaericus strain 2297: nucleotide sequence of 41.9 kDa toxin gene.</title>
        <authorList>
            <person name="Hindley J."/>
            <person name="Berry C."/>
        </authorList>
    </citation>
    <scope>NUCLEOTIDE SEQUENCE [GENOMIC DNA]</scope>
    <source>
        <strain>2297</strain>
    </source>
</reference>
<reference key="2">
    <citation type="journal article" date="1988" name="J. Bacteriol.">
        <title>Sequence analysis of the mosquitocidal toxin genes encoding 51.4- and 41.9-kilodalton proteins from Bacillus sphaericus 2362 and 2297.</title>
        <authorList>
            <person name="Baumann L."/>
            <person name="Broadwell A.H."/>
            <person name="Baumann P."/>
        </authorList>
    </citation>
    <scope>NUCLEOTIDE SEQUENCE [GENOMIC DNA]</scope>
    <source>
        <strain>2297</strain>
    </source>
</reference>
<reference key="3">
    <citation type="journal article" date="1982" name="Appl. Environ. Microbiol.">
        <title>Ultrastructural analysis of spores and parasporal crystals formed by Bacillus sphaericus 2297.</title>
        <authorList>
            <person name="Yousten A.A."/>
            <person name="Davidson E.W."/>
        </authorList>
    </citation>
    <scope>DEVELOPMENTAL STAGE</scope>
    <scope>CRYSTAL DISSOLUTION FOLLOWING HOST FEEDING</scope>
    <source>
        <strain>2297</strain>
    </source>
</reference>
<reference key="4">
    <citation type="journal article" date="1992" name="J. Gen. Microbiol.">
        <title>Binding of purified Bacillus sphaericus binary toxin and its deletion derivatives to Culex quinquefasciatus gut: elucidation of functional binding domains.</title>
        <authorList>
            <person name="Oei C."/>
            <person name="Hindley J."/>
            <person name="Berry C."/>
        </authorList>
    </citation>
    <scope>FUNCTION</scope>
    <scope>HOST UPTAKE</scope>
    <scope>MUTAGENESIS OF 1-MET--ALA-34; 1-MET--TYR-17; 350-TYR--ASN-370 AND 359-LEU--ASN-370</scope>
    <source>
        <strain>2297</strain>
    </source>
</reference>
<reference key="5">
    <citation type="journal article" date="1993" name="J. Bacteriol.">
        <title>Genetic determinants of host ranges of Bacillus sphaericus mosquito larvicidal toxins.</title>
        <authorList>
            <person name="Berry C."/>
            <person name="Hindley J."/>
            <person name="Ehrhardt A.F."/>
            <person name="Grounds T."/>
            <person name="de Souza I."/>
            <person name="Davidson E.W."/>
        </authorList>
    </citation>
    <scope>FUNCTION</scope>
    <scope>HOST RANGE</scope>
    <scope>MUTAGENESIS OF PHE-99 AND SER-104</scope>
    <source>
        <strain>2297</strain>
    </source>
</reference>
<organism>
    <name type="scientific">Lysinibacillus sphaericus</name>
    <name type="common">Bacillus sphaericus</name>
    <dbReference type="NCBI Taxonomy" id="1421"/>
    <lineage>
        <taxon>Bacteria</taxon>
        <taxon>Bacillati</taxon>
        <taxon>Bacillota</taxon>
        <taxon>Bacilli</taxon>
        <taxon>Bacillales</taxon>
        <taxon>Bacillaceae</taxon>
        <taxon>Lysinibacillus</taxon>
    </lineage>
</organism>
<name>BINA2_LYSSH</name>
<keyword id="KW-1015">Disulfide bond</keyword>
<keyword id="KW-0749">Sporulation</keyword>
<keyword id="KW-0800">Toxin</keyword>
<keyword id="KW-0843">Virulence</keyword>